<organism>
    <name type="scientific">Drosophila melanogaster</name>
    <name type="common">Fruit fly</name>
    <dbReference type="NCBI Taxonomy" id="7227"/>
    <lineage>
        <taxon>Eukaryota</taxon>
        <taxon>Metazoa</taxon>
        <taxon>Ecdysozoa</taxon>
        <taxon>Arthropoda</taxon>
        <taxon>Hexapoda</taxon>
        <taxon>Insecta</taxon>
        <taxon>Pterygota</taxon>
        <taxon>Neoptera</taxon>
        <taxon>Endopterygota</taxon>
        <taxon>Diptera</taxon>
        <taxon>Brachycera</taxon>
        <taxon>Muscomorpha</taxon>
        <taxon>Ephydroidea</taxon>
        <taxon>Drosophilidae</taxon>
        <taxon>Drosophila</taxon>
        <taxon>Sophophora</taxon>
    </lineage>
</organism>
<comment type="function">
    <text evidence="3 4">Required for the formation of DNA double-strand breaks during meiosis together with narya and nenya.</text>
</comment>
<comment type="subunit">
    <text evidence="8">May interact with itself and with narya and nenya through their RING-type zinc fingers.</text>
</comment>
<comment type="subcellular location">
    <subcellularLocation>
        <location evidence="3 4">Chromosome</location>
    </subcellularLocation>
    <text evidence="3 4">During early pachytene, colocalizes with narya to the central region of the synaptonemal complex (SC) in both linear stretches and discrete foci which correspond to recombination nodules. As pachytene progresses, found mainly at recombination nodules. Double-strand break formation is required for recruitment to recombination nodules but not for linear localization to the central region of the SC.</text>
</comment>
<comment type="tissue specificity">
    <text evidence="4">Expressed in nurse cell and pro-oocytes (at protein level).</text>
</comment>
<comment type="disruption phenotype">
    <text evidence="3 4">High levels of X chromosome non-disjunction at the first meiotic division, severe failure to initiate DNA double-strand breaks in oocytes in early pachytene and complete failure of meiotic recombination.</text>
</comment>
<comment type="miscellaneous">
    <text evidence="7">The name 'vilya' derives from the fact that this protein contains a RING-type zinc finger and vilya is the mightiest of the three rings of power given by the elves of Eregion in J.R.R. Tolkien's books.</text>
</comment>
<protein>
    <recommendedName>
        <fullName evidence="5">RING finger protein vilya</fullName>
    </recommendedName>
</protein>
<proteinExistence type="evidence at protein level"/>
<dbReference type="EMBL" id="AE014298">
    <property type="protein sequence ID" value="AAF45818.1"/>
    <property type="molecule type" value="Genomic_DNA"/>
</dbReference>
<dbReference type="EMBL" id="AL021728">
    <property type="protein sequence ID" value="CAA16813.1"/>
    <property type="molecule type" value="Genomic_DNA"/>
</dbReference>
<dbReference type="EMBL" id="BT028822">
    <property type="protein sequence ID" value="ABI34203.1"/>
    <property type="molecule type" value="mRNA"/>
</dbReference>
<dbReference type="EMBL" id="BT028854">
    <property type="protein sequence ID" value="ABI34235.1"/>
    <property type="molecule type" value="mRNA"/>
</dbReference>
<dbReference type="PIR" id="T13649">
    <property type="entry name" value="T13649"/>
</dbReference>
<dbReference type="RefSeq" id="NP_570026.1">
    <property type="nucleotide sequence ID" value="NM_130670.2"/>
</dbReference>
<dbReference type="SMR" id="O76908"/>
<dbReference type="DIP" id="DIP-18383N"/>
<dbReference type="FunCoup" id="O76908">
    <property type="interactions" value="2"/>
</dbReference>
<dbReference type="IntAct" id="O76908">
    <property type="interactions" value="14"/>
</dbReference>
<dbReference type="STRING" id="7227.FBpp0070464"/>
<dbReference type="PaxDb" id="7227-FBpp0070464"/>
<dbReference type="DNASU" id="31264"/>
<dbReference type="EnsemblMetazoa" id="FBtr0070486">
    <property type="protein sequence ID" value="FBpp0070464"/>
    <property type="gene ID" value="FBgn0283545"/>
</dbReference>
<dbReference type="GeneID" id="31264"/>
<dbReference type="KEGG" id="dme:Dmel_CG2709"/>
<dbReference type="UCSC" id="CG2709-RA">
    <property type="organism name" value="d. melanogaster"/>
</dbReference>
<dbReference type="AGR" id="FB:FBgn0283545"/>
<dbReference type="CTD" id="31264"/>
<dbReference type="FlyBase" id="FBgn0283545">
    <property type="gene designation" value="vilya"/>
</dbReference>
<dbReference type="VEuPathDB" id="VectorBase:FBgn0283545"/>
<dbReference type="eggNOG" id="KOG4739">
    <property type="taxonomic scope" value="Eukaryota"/>
</dbReference>
<dbReference type="HOGENOM" id="CLU_1130109_0_0_1"/>
<dbReference type="InParanoid" id="O76908"/>
<dbReference type="OMA" id="SKLWIHC"/>
<dbReference type="OrthoDB" id="7841769at2759"/>
<dbReference type="PhylomeDB" id="O76908"/>
<dbReference type="SignaLink" id="O76908"/>
<dbReference type="GenomeRNAi" id="31264"/>
<dbReference type="PRO" id="PR:O76908"/>
<dbReference type="Proteomes" id="UP000000803">
    <property type="component" value="Chromosome X"/>
</dbReference>
<dbReference type="Bgee" id="FBgn0283545">
    <property type="expression patterns" value="Expressed in early-mid elongation-stage spermatid (Drosophila) in testis and 3 other cell types or tissues"/>
</dbReference>
<dbReference type="GO" id="GO:0000801">
    <property type="term" value="C:central element"/>
    <property type="evidence" value="ECO:0000314"/>
    <property type="project" value="FlyBase"/>
</dbReference>
<dbReference type="GO" id="GO:0005694">
    <property type="term" value="C:chromosome"/>
    <property type="evidence" value="ECO:0000314"/>
    <property type="project" value="UniProtKB"/>
</dbReference>
<dbReference type="GO" id="GO:0005713">
    <property type="term" value="C:recombination nodule"/>
    <property type="evidence" value="ECO:0000314"/>
    <property type="project" value="UniProtKB"/>
</dbReference>
<dbReference type="GO" id="GO:0035861">
    <property type="term" value="C:site of double-strand break"/>
    <property type="evidence" value="ECO:0000314"/>
    <property type="project" value="FlyBase"/>
</dbReference>
<dbReference type="GO" id="GO:0000795">
    <property type="term" value="C:synaptonemal complex"/>
    <property type="evidence" value="ECO:0000314"/>
    <property type="project" value="UniProtKB"/>
</dbReference>
<dbReference type="GO" id="GO:0019789">
    <property type="term" value="F:SUMO transferase activity"/>
    <property type="evidence" value="ECO:0000318"/>
    <property type="project" value="GO_Central"/>
</dbReference>
<dbReference type="GO" id="GO:0008270">
    <property type="term" value="F:zinc ion binding"/>
    <property type="evidence" value="ECO:0007669"/>
    <property type="project" value="UniProtKB-KW"/>
</dbReference>
<dbReference type="GO" id="GO:0007143">
    <property type="term" value="P:female meiotic nuclear division"/>
    <property type="evidence" value="ECO:0000315"/>
    <property type="project" value="FlyBase"/>
</dbReference>
<dbReference type="GO" id="GO:0007129">
    <property type="term" value="P:homologous chromosome pairing at meiosis"/>
    <property type="evidence" value="ECO:0000318"/>
    <property type="project" value="GO_Central"/>
</dbReference>
<dbReference type="GO" id="GO:1903343">
    <property type="term" value="P:positive regulation of meiotic DNA double-strand break formation"/>
    <property type="evidence" value="ECO:0000315"/>
    <property type="project" value="UniProtKB"/>
</dbReference>
<dbReference type="GO" id="GO:0007131">
    <property type="term" value="P:reciprocal meiotic recombination"/>
    <property type="evidence" value="ECO:0007669"/>
    <property type="project" value="InterPro"/>
</dbReference>
<dbReference type="FunFam" id="3.30.40.10:FF:001070">
    <property type="entry name" value="GM16934"/>
    <property type="match status" value="1"/>
</dbReference>
<dbReference type="Gene3D" id="3.30.40.10">
    <property type="entry name" value="Zinc/RING finger domain, C3HC4 (zinc finger)"/>
    <property type="match status" value="1"/>
</dbReference>
<dbReference type="InterPro" id="IPR042123">
    <property type="entry name" value="Zip3/RNF212-like"/>
</dbReference>
<dbReference type="InterPro" id="IPR001841">
    <property type="entry name" value="Znf_RING"/>
</dbReference>
<dbReference type="InterPro" id="IPR013083">
    <property type="entry name" value="Znf_RING/FYVE/PHD"/>
</dbReference>
<dbReference type="InterPro" id="IPR017907">
    <property type="entry name" value="Znf_RING_CS"/>
</dbReference>
<dbReference type="PANTHER" id="PTHR22663">
    <property type="entry name" value="RING FINGER PROTEIN NARYA-RELATED"/>
    <property type="match status" value="1"/>
</dbReference>
<dbReference type="PANTHER" id="PTHR22663:SF17">
    <property type="entry name" value="RING FINGER PROTEIN NARYA-RELATED"/>
    <property type="match status" value="1"/>
</dbReference>
<dbReference type="Pfam" id="PF14634">
    <property type="entry name" value="zf-RING_5"/>
    <property type="match status" value="1"/>
</dbReference>
<dbReference type="SUPFAM" id="SSF57850">
    <property type="entry name" value="RING/U-box"/>
    <property type="match status" value="1"/>
</dbReference>
<dbReference type="PROSITE" id="PS00518">
    <property type="entry name" value="ZF_RING_1"/>
    <property type="match status" value="1"/>
</dbReference>
<dbReference type="PROSITE" id="PS50089">
    <property type="entry name" value="ZF_RING_2"/>
    <property type="match status" value="1"/>
</dbReference>
<accession>O76908</accession>
<reference key="1">
    <citation type="journal article" date="2000" name="Science">
        <title>The genome sequence of Drosophila melanogaster.</title>
        <authorList>
            <person name="Adams M.D."/>
            <person name="Celniker S.E."/>
            <person name="Holt R.A."/>
            <person name="Evans C.A."/>
            <person name="Gocayne J.D."/>
            <person name="Amanatides P.G."/>
            <person name="Scherer S.E."/>
            <person name="Li P.W."/>
            <person name="Hoskins R.A."/>
            <person name="Galle R.F."/>
            <person name="George R.A."/>
            <person name="Lewis S.E."/>
            <person name="Richards S."/>
            <person name="Ashburner M."/>
            <person name="Henderson S.N."/>
            <person name="Sutton G.G."/>
            <person name="Wortman J.R."/>
            <person name="Yandell M.D."/>
            <person name="Zhang Q."/>
            <person name="Chen L.X."/>
            <person name="Brandon R.C."/>
            <person name="Rogers Y.-H.C."/>
            <person name="Blazej R.G."/>
            <person name="Champe M."/>
            <person name="Pfeiffer B.D."/>
            <person name="Wan K.H."/>
            <person name="Doyle C."/>
            <person name="Baxter E.G."/>
            <person name="Helt G."/>
            <person name="Nelson C.R."/>
            <person name="Miklos G.L.G."/>
            <person name="Abril J.F."/>
            <person name="Agbayani A."/>
            <person name="An H.-J."/>
            <person name="Andrews-Pfannkoch C."/>
            <person name="Baldwin D."/>
            <person name="Ballew R.M."/>
            <person name="Basu A."/>
            <person name="Baxendale J."/>
            <person name="Bayraktaroglu L."/>
            <person name="Beasley E.M."/>
            <person name="Beeson K.Y."/>
            <person name="Benos P.V."/>
            <person name="Berman B.P."/>
            <person name="Bhandari D."/>
            <person name="Bolshakov S."/>
            <person name="Borkova D."/>
            <person name="Botchan M.R."/>
            <person name="Bouck J."/>
            <person name="Brokstein P."/>
            <person name="Brottier P."/>
            <person name="Burtis K.C."/>
            <person name="Busam D.A."/>
            <person name="Butler H."/>
            <person name="Cadieu E."/>
            <person name="Center A."/>
            <person name="Chandra I."/>
            <person name="Cherry J.M."/>
            <person name="Cawley S."/>
            <person name="Dahlke C."/>
            <person name="Davenport L.B."/>
            <person name="Davies P."/>
            <person name="de Pablos B."/>
            <person name="Delcher A."/>
            <person name="Deng Z."/>
            <person name="Mays A.D."/>
            <person name="Dew I."/>
            <person name="Dietz S.M."/>
            <person name="Dodson K."/>
            <person name="Doup L.E."/>
            <person name="Downes M."/>
            <person name="Dugan-Rocha S."/>
            <person name="Dunkov B.C."/>
            <person name="Dunn P."/>
            <person name="Durbin K.J."/>
            <person name="Evangelista C.C."/>
            <person name="Ferraz C."/>
            <person name="Ferriera S."/>
            <person name="Fleischmann W."/>
            <person name="Fosler C."/>
            <person name="Gabrielian A.E."/>
            <person name="Garg N.S."/>
            <person name="Gelbart W.M."/>
            <person name="Glasser K."/>
            <person name="Glodek A."/>
            <person name="Gong F."/>
            <person name="Gorrell J.H."/>
            <person name="Gu Z."/>
            <person name="Guan P."/>
            <person name="Harris M."/>
            <person name="Harris N.L."/>
            <person name="Harvey D.A."/>
            <person name="Heiman T.J."/>
            <person name="Hernandez J.R."/>
            <person name="Houck J."/>
            <person name="Hostin D."/>
            <person name="Houston K.A."/>
            <person name="Howland T.J."/>
            <person name="Wei M.-H."/>
            <person name="Ibegwam C."/>
            <person name="Jalali M."/>
            <person name="Kalush F."/>
            <person name="Karpen G.H."/>
            <person name="Ke Z."/>
            <person name="Kennison J.A."/>
            <person name="Ketchum K.A."/>
            <person name="Kimmel B.E."/>
            <person name="Kodira C.D."/>
            <person name="Kraft C.L."/>
            <person name="Kravitz S."/>
            <person name="Kulp D."/>
            <person name="Lai Z."/>
            <person name="Lasko P."/>
            <person name="Lei Y."/>
            <person name="Levitsky A.A."/>
            <person name="Li J.H."/>
            <person name="Li Z."/>
            <person name="Liang Y."/>
            <person name="Lin X."/>
            <person name="Liu X."/>
            <person name="Mattei B."/>
            <person name="McIntosh T.C."/>
            <person name="McLeod M.P."/>
            <person name="McPherson D."/>
            <person name="Merkulov G."/>
            <person name="Milshina N.V."/>
            <person name="Mobarry C."/>
            <person name="Morris J."/>
            <person name="Moshrefi A."/>
            <person name="Mount S.M."/>
            <person name="Moy M."/>
            <person name="Murphy B."/>
            <person name="Murphy L."/>
            <person name="Muzny D.M."/>
            <person name="Nelson D.L."/>
            <person name="Nelson D.R."/>
            <person name="Nelson K.A."/>
            <person name="Nixon K."/>
            <person name="Nusskern D.R."/>
            <person name="Pacleb J.M."/>
            <person name="Palazzolo M."/>
            <person name="Pittman G.S."/>
            <person name="Pan S."/>
            <person name="Pollard J."/>
            <person name="Puri V."/>
            <person name="Reese M.G."/>
            <person name="Reinert K."/>
            <person name="Remington K."/>
            <person name="Saunders R.D.C."/>
            <person name="Scheeler F."/>
            <person name="Shen H."/>
            <person name="Shue B.C."/>
            <person name="Siden-Kiamos I."/>
            <person name="Simpson M."/>
            <person name="Skupski M.P."/>
            <person name="Smith T.J."/>
            <person name="Spier E."/>
            <person name="Spradling A.C."/>
            <person name="Stapleton M."/>
            <person name="Strong R."/>
            <person name="Sun E."/>
            <person name="Svirskas R."/>
            <person name="Tector C."/>
            <person name="Turner R."/>
            <person name="Venter E."/>
            <person name="Wang A.H."/>
            <person name="Wang X."/>
            <person name="Wang Z.-Y."/>
            <person name="Wassarman D.A."/>
            <person name="Weinstock G.M."/>
            <person name="Weissenbach J."/>
            <person name="Williams S.M."/>
            <person name="Woodage T."/>
            <person name="Worley K.C."/>
            <person name="Wu D."/>
            <person name="Yang S."/>
            <person name="Yao Q.A."/>
            <person name="Ye J."/>
            <person name="Yeh R.-F."/>
            <person name="Zaveri J.S."/>
            <person name="Zhan M."/>
            <person name="Zhang G."/>
            <person name="Zhao Q."/>
            <person name="Zheng L."/>
            <person name="Zheng X.H."/>
            <person name="Zhong F.N."/>
            <person name="Zhong W."/>
            <person name="Zhou X."/>
            <person name="Zhu S.C."/>
            <person name="Zhu X."/>
            <person name="Smith H.O."/>
            <person name="Gibbs R.A."/>
            <person name="Myers E.W."/>
            <person name="Rubin G.M."/>
            <person name="Venter J.C."/>
        </authorList>
    </citation>
    <scope>NUCLEOTIDE SEQUENCE [LARGE SCALE GENOMIC DNA]</scope>
    <source>
        <strain evidence="12">Berkeley</strain>
    </source>
</reference>
<reference evidence="12" key="2">
    <citation type="journal article" date="2002" name="Genome Biol.">
        <title>Annotation of the Drosophila melanogaster euchromatic genome: a systematic review.</title>
        <authorList>
            <person name="Misra S."/>
            <person name="Crosby M.A."/>
            <person name="Mungall C.J."/>
            <person name="Matthews B.B."/>
            <person name="Campbell K.S."/>
            <person name="Hradecky P."/>
            <person name="Huang Y."/>
            <person name="Kaminker J.S."/>
            <person name="Millburn G.H."/>
            <person name="Prochnik S.E."/>
            <person name="Smith C.D."/>
            <person name="Tupy J.L."/>
            <person name="Whitfield E.J."/>
            <person name="Bayraktaroglu L."/>
            <person name="Berman B.P."/>
            <person name="Bettencourt B.R."/>
            <person name="Celniker S.E."/>
            <person name="de Grey A.D.N.J."/>
            <person name="Drysdale R.A."/>
            <person name="Harris N.L."/>
            <person name="Richter J."/>
            <person name="Russo S."/>
            <person name="Schroeder A.J."/>
            <person name="Shu S.Q."/>
            <person name="Stapleton M."/>
            <person name="Yamada C."/>
            <person name="Ashburner M."/>
            <person name="Gelbart W.M."/>
            <person name="Rubin G.M."/>
            <person name="Lewis S.E."/>
        </authorList>
    </citation>
    <scope>GENOME REANNOTATION</scope>
    <source>
        <strain evidence="12">Berkeley</strain>
    </source>
</reference>
<reference evidence="10" key="3">
    <citation type="journal article" date="2000" name="Science">
        <title>From sequence to chromosome: the tip of the X chromosome of D. melanogaster.</title>
        <authorList>
            <person name="Benos P.V."/>
            <person name="Gatt M.K."/>
            <person name="Ashburner M."/>
            <person name="Murphy L."/>
            <person name="Harris D."/>
            <person name="Barrell B.G."/>
            <person name="Ferraz C."/>
            <person name="Vidal S."/>
            <person name="Brun C."/>
            <person name="Demailles J."/>
            <person name="Cadieu E."/>
            <person name="Dreano S."/>
            <person name="Gloux S."/>
            <person name="Lelaure V."/>
            <person name="Mottier S."/>
            <person name="Galibert F."/>
            <person name="Borkova D."/>
            <person name="Minana B."/>
            <person name="Kafatos F.C."/>
            <person name="Louis C."/>
            <person name="Siden-Kiamos I."/>
            <person name="Bolshakov S."/>
            <person name="Papagiannakis G."/>
            <person name="Spanos L."/>
            <person name="Cox S."/>
            <person name="Madueno E."/>
            <person name="de Pablos B."/>
            <person name="Modolell J."/>
            <person name="Peter A."/>
            <person name="Schoettler P."/>
            <person name="Werner M."/>
            <person name="Mourkioti F."/>
            <person name="Beinert N."/>
            <person name="Dowe G."/>
            <person name="Schaefer U."/>
            <person name="Jaeckle H."/>
            <person name="Bucheton A."/>
            <person name="Callister D.M."/>
            <person name="Campbell L.A."/>
            <person name="Darlamitsou A."/>
            <person name="Henderson N.S."/>
            <person name="McMillan P.J."/>
            <person name="Salles C."/>
            <person name="Tait E.A."/>
            <person name="Valenti P."/>
            <person name="Saunders R.D.C."/>
            <person name="Glover D.M."/>
        </authorList>
    </citation>
    <scope>NUCLEOTIDE SEQUENCE [LARGE SCALE GENOMIC DNA]</scope>
    <source>
        <strain evidence="10">Oregon-R</strain>
    </source>
</reference>
<reference evidence="9" key="4">
    <citation type="submission" date="2006-08" db="EMBL/GenBank/DDBJ databases">
        <authorList>
            <person name="Stapleton M."/>
            <person name="Carlson J."/>
            <person name="Chavez C."/>
            <person name="Frise E."/>
            <person name="George R."/>
            <person name="Pacleb J."/>
            <person name="Park S."/>
            <person name="Wan K."/>
            <person name="Yu C."/>
            <person name="Celniker S."/>
        </authorList>
    </citation>
    <scope>NUCLEOTIDE SEQUENCE [LARGE SCALE MRNA]</scope>
</reference>
<reference evidence="6" key="5">
    <citation type="journal article" date="2015" name="Elife">
        <title>Vilya, a component of the recombination nodule, is required for meiotic double-strand break formation in Drosophila.</title>
        <authorList>
            <person name="Lake C.M."/>
            <person name="Nielsen R.J."/>
            <person name="Guo F."/>
            <person name="Unruh J.R."/>
            <person name="Slaughter B.D."/>
            <person name="Hawley R.S."/>
        </authorList>
    </citation>
    <scope>FUNCTION</scope>
    <scope>SUBCELLULAR LOCATION</scope>
    <scope>DISRUPTION PHENOTYPE</scope>
</reference>
<reference key="6">
    <citation type="journal article" date="2019" name="PLoS Genet.">
        <title>Narya, a RING finger domain-containing protein, is required for meiotic DNA double-strand break formation and crossover maturation in Drosophila melanogaster.</title>
        <authorList>
            <person name="Lake C.M."/>
            <person name="Nielsen R.J."/>
            <person name="Bonner A.M."/>
            <person name="Eche S."/>
            <person name="White-Brown S."/>
            <person name="McKim K.S."/>
            <person name="Hawley R.S."/>
        </authorList>
    </citation>
    <scope>FUNCTION</scope>
    <scope>SUBCELLULAR LOCATION</scope>
    <scope>TISSUE SPECIFICITY</scope>
    <scope>DISRUPTION PHENOTYPE</scope>
</reference>
<feature type="chain" id="PRO_0000436008" description="RING finger protein vilya">
    <location>
        <begin position="1"/>
        <end position="237"/>
    </location>
</feature>
<feature type="zinc finger region" description="RING-type" evidence="1">
    <location>
        <begin position="21"/>
        <end position="69"/>
    </location>
</feature>
<feature type="region of interest" description="Disordered" evidence="2">
    <location>
        <begin position="172"/>
        <end position="237"/>
    </location>
</feature>
<feature type="compositionally biased region" description="Low complexity" evidence="2">
    <location>
        <begin position="180"/>
        <end position="195"/>
    </location>
</feature>
<feature type="compositionally biased region" description="Polar residues" evidence="2">
    <location>
        <begin position="221"/>
        <end position="237"/>
    </location>
</feature>
<evidence type="ECO:0000255" key="1">
    <source>
        <dbReference type="PROSITE-ProRule" id="PRU00175"/>
    </source>
</evidence>
<evidence type="ECO:0000256" key="2">
    <source>
        <dbReference type="SAM" id="MobiDB-lite"/>
    </source>
</evidence>
<evidence type="ECO:0000269" key="3">
    <source>
    </source>
</evidence>
<evidence type="ECO:0000269" key="4">
    <source>
    </source>
</evidence>
<evidence type="ECO:0000303" key="5">
    <source>
    </source>
</evidence>
<evidence type="ECO:0000305" key="6"/>
<evidence type="ECO:0000305" key="7">
    <source>
    </source>
</evidence>
<evidence type="ECO:0000305" key="8">
    <source>
    </source>
</evidence>
<evidence type="ECO:0000312" key="9">
    <source>
        <dbReference type="EMBL" id="ABI34203.1"/>
    </source>
</evidence>
<evidence type="ECO:0000312" key="10">
    <source>
        <dbReference type="EMBL" id="CAA16813.1"/>
    </source>
</evidence>
<evidence type="ECO:0000312" key="11">
    <source>
        <dbReference type="FlyBase" id="FBgn0283545"/>
    </source>
</evidence>
<evidence type="ECO:0000312" key="12">
    <source>
        <dbReference type="Proteomes" id="UP000000803"/>
    </source>
</evidence>
<keyword id="KW-0158">Chromosome</keyword>
<keyword id="KW-0469">Meiosis</keyword>
<keyword id="KW-0479">Metal-binding</keyword>
<keyword id="KW-1185">Reference proteome</keyword>
<keyword id="KW-0862">Zinc</keyword>
<keyword id="KW-0863">Zinc-finger</keyword>
<name>VILYA_DROME</name>
<sequence>MAKSQAGQTVEPEASKLWIHCNSCCALFCDKKHTFFLLACHHVFCERCVKVSAGRTPSDAPIFECSTCRRSVRGRQLTNSMPNHFKQLFHPEPFTIGNDFVETFQRGNHRHFDKYKERKELEMDKLFKDIEVAKSVCQKRFLEAQMLRVERKKLMQRSRYIKAEVANRKAEMHRMAQAYRSRSLTSQSSSSAQRSARGRPRGRGTATQSSSRRRSTESAKRQQITSFIHPPNNSFDL</sequence>
<gene>
    <name evidence="5" type="primary">vilya</name>
    <name evidence="11" type="ORF">CG2709</name>
</gene>